<organism>
    <name type="scientific">Scyliorhinus canicula</name>
    <name type="common">Small-spotted catshark</name>
    <name type="synonym">Squalus canicula</name>
    <dbReference type="NCBI Taxonomy" id="7830"/>
    <lineage>
        <taxon>Eukaryota</taxon>
        <taxon>Metazoa</taxon>
        <taxon>Chordata</taxon>
        <taxon>Craniata</taxon>
        <taxon>Vertebrata</taxon>
        <taxon>Chondrichthyes</taxon>
        <taxon>Elasmobranchii</taxon>
        <taxon>Galeomorphii</taxon>
        <taxon>Galeoidea</taxon>
        <taxon>Carcharhiniformes</taxon>
        <taxon>Scyliorhinidae</taxon>
        <taxon>Scyliorhinus</taxon>
    </lineage>
</organism>
<protein>
    <recommendedName>
        <fullName>13.2 kDa protein</fullName>
    </recommendedName>
</protein>
<proteinExistence type="evidence at protein level"/>
<accession>P83011</accession>
<feature type="chain" id="PRO_0000064350" description="13.2 kDa protein">
    <location>
        <begin position="1"/>
        <end position="14" status="greater than"/>
    </location>
</feature>
<feature type="non-terminal residue" evidence="2">
    <location>
        <position position="14"/>
    </location>
</feature>
<sequence length="14" mass="1575">MIFTAXDRSAIEXV</sequence>
<comment type="subcellular location">
    <subcellularLocation>
        <location>Microsome</location>
    </subcellularLocation>
    <subcellularLocation>
        <location>Endoplasmic reticulum</location>
    </subcellularLocation>
</comment>
<dbReference type="GO" id="GO:0005783">
    <property type="term" value="C:endoplasmic reticulum"/>
    <property type="evidence" value="ECO:0007669"/>
    <property type="project" value="UniProtKB-SubCell"/>
</dbReference>
<dbReference type="GO" id="GO:0043231">
    <property type="term" value="C:intracellular membrane-bounded organelle"/>
    <property type="evidence" value="ECO:0000314"/>
    <property type="project" value="UniProtKB"/>
</dbReference>
<name>13KDA_SCYCA</name>
<evidence type="ECO:0000269" key="1">
    <source>
    </source>
</evidence>
<evidence type="ECO:0000303" key="2">
    <source>
    </source>
</evidence>
<evidence type="ECO:0000305" key="3"/>
<reference evidence="3" key="1">
    <citation type="journal article" date="2001" name="Biochem. Biophys. Res. Commun.">
        <title>N-terminal sequences of small ion channels in rectal glands of sharks: a biochemical hallmark for classification and phylogeny?</title>
        <authorList>
            <person name="Schuurmans Stekhoven F.M.A.H."/>
            <person name="Flik G."/>
            <person name="Wendelaar Bonga S.E."/>
        </authorList>
    </citation>
    <scope>PROTEIN SEQUENCE</scope>
    <source>
        <tissue evidence="1">Rectal gland</tissue>
    </source>
</reference>
<keyword id="KW-0903">Direct protein sequencing</keyword>
<keyword id="KW-0256">Endoplasmic reticulum</keyword>
<keyword id="KW-0492">Microsome</keyword>